<name>ISPF_VIBC3</name>
<evidence type="ECO:0000255" key="1">
    <source>
        <dbReference type="HAMAP-Rule" id="MF_00107"/>
    </source>
</evidence>
<proteinExistence type="inferred from homology"/>
<protein>
    <recommendedName>
        <fullName evidence="1">2-C-methyl-D-erythritol 2,4-cyclodiphosphate synthase</fullName>
        <shortName evidence="1">MECDP-synthase</shortName>
        <shortName evidence="1">MECPP-synthase</shortName>
        <shortName evidence="1">MECPS</shortName>
        <ecNumber evidence="1">4.6.1.12</ecNumber>
    </recommendedName>
</protein>
<organism>
    <name type="scientific">Vibrio cholerae serotype O1 (strain ATCC 39541 / Classical Ogawa 395 / O395)</name>
    <dbReference type="NCBI Taxonomy" id="345073"/>
    <lineage>
        <taxon>Bacteria</taxon>
        <taxon>Pseudomonadati</taxon>
        <taxon>Pseudomonadota</taxon>
        <taxon>Gammaproteobacteria</taxon>
        <taxon>Vibrionales</taxon>
        <taxon>Vibrionaceae</taxon>
        <taxon>Vibrio</taxon>
    </lineage>
</organism>
<accession>A5F9D7</accession>
<accession>C3LX55</accession>
<reference key="1">
    <citation type="submission" date="2007-03" db="EMBL/GenBank/DDBJ databases">
        <authorList>
            <person name="Heidelberg J."/>
        </authorList>
    </citation>
    <scope>NUCLEOTIDE SEQUENCE [LARGE SCALE GENOMIC DNA]</scope>
    <source>
        <strain>ATCC 39541 / Classical Ogawa 395 / O395</strain>
    </source>
</reference>
<reference key="2">
    <citation type="journal article" date="2008" name="PLoS ONE">
        <title>A recalibrated molecular clock and independent origins for the cholera pandemic clones.</title>
        <authorList>
            <person name="Feng L."/>
            <person name="Reeves P.R."/>
            <person name="Lan R."/>
            <person name="Ren Y."/>
            <person name="Gao C."/>
            <person name="Zhou Z."/>
            <person name="Ren Y."/>
            <person name="Cheng J."/>
            <person name="Wang W."/>
            <person name="Wang J."/>
            <person name="Qian W."/>
            <person name="Li D."/>
            <person name="Wang L."/>
        </authorList>
    </citation>
    <scope>NUCLEOTIDE SEQUENCE [LARGE SCALE GENOMIC DNA]</scope>
    <source>
        <strain>ATCC 39541 / Classical Ogawa 395 / O395</strain>
    </source>
</reference>
<comment type="function">
    <text evidence="1">Involved in the biosynthesis of isopentenyl diphosphate (IPP) and dimethylallyl diphosphate (DMAPP), two major building blocks of isoprenoid compounds. Catalyzes the conversion of 4-diphosphocytidyl-2-C-methyl-D-erythritol 2-phosphate (CDP-ME2P) to 2-C-methyl-D-erythritol 2,4-cyclodiphosphate (ME-CPP) with a corresponding release of cytidine 5-monophosphate (CMP).</text>
</comment>
<comment type="catalytic activity">
    <reaction evidence="1">
        <text>4-CDP-2-C-methyl-D-erythritol 2-phosphate = 2-C-methyl-D-erythritol 2,4-cyclic diphosphate + CMP</text>
        <dbReference type="Rhea" id="RHEA:23864"/>
        <dbReference type="ChEBI" id="CHEBI:57919"/>
        <dbReference type="ChEBI" id="CHEBI:58483"/>
        <dbReference type="ChEBI" id="CHEBI:60377"/>
        <dbReference type="EC" id="4.6.1.12"/>
    </reaction>
</comment>
<comment type="cofactor">
    <cofactor evidence="1">
        <name>a divalent metal cation</name>
        <dbReference type="ChEBI" id="CHEBI:60240"/>
    </cofactor>
    <text evidence="1">Binds 1 divalent metal cation per subunit.</text>
</comment>
<comment type="pathway">
    <text evidence="1">Isoprenoid biosynthesis; isopentenyl diphosphate biosynthesis via DXP pathway; isopentenyl diphosphate from 1-deoxy-D-xylulose 5-phosphate: step 4/6.</text>
</comment>
<comment type="subunit">
    <text evidence="1">Homotrimer.</text>
</comment>
<comment type="similarity">
    <text evidence="1">Belongs to the IspF family.</text>
</comment>
<dbReference type="EC" id="4.6.1.12" evidence="1"/>
<dbReference type="EMBL" id="CP000627">
    <property type="protein sequence ID" value="ABQ19786.1"/>
    <property type="molecule type" value="Genomic_DNA"/>
</dbReference>
<dbReference type="EMBL" id="CP001235">
    <property type="protein sequence ID" value="ACP08565.1"/>
    <property type="molecule type" value="Genomic_DNA"/>
</dbReference>
<dbReference type="RefSeq" id="WP_000619209.1">
    <property type="nucleotide sequence ID" value="NZ_JAACZH010000029.1"/>
</dbReference>
<dbReference type="SMR" id="A5F9D7"/>
<dbReference type="KEGG" id="vco:VC0395_A0057"/>
<dbReference type="KEGG" id="vcr:VC395_0546"/>
<dbReference type="PATRIC" id="fig|345073.21.peg.536"/>
<dbReference type="eggNOG" id="COG0245">
    <property type="taxonomic scope" value="Bacteria"/>
</dbReference>
<dbReference type="HOGENOM" id="CLU_084630_2_0_6"/>
<dbReference type="OrthoDB" id="9804336at2"/>
<dbReference type="UniPathway" id="UPA00056">
    <property type="reaction ID" value="UER00095"/>
</dbReference>
<dbReference type="Proteomes" id="UP000000249">
    <property type="component" value="Chromosome 2"/>
</dbReference>
<dbReference type="GO" id="GO:0008685">
    <property type="term" value="F:2-C-methyl-D-erythritol 2,4-cyclodiphosphate synthase activity"/>
    <property type="evidence" value="ECO:0007669"/>
    <property type="project" value="UniProtKB-UniRule"/>
</dbReference>
<dbReference type="GO" id="GO:0046872">
    <property type="term" value="F:metal ion binding"/>
    <property type="evidence" value="ECO:0007669"/>
    <property type="project" value="UniProtKB-KW"/>
</dbReference>
<dbReference type="GO" id="GO:0019288">
    <property type="term" value="P:isopentenyl diphosphate biosynthetic process, methylerythritol 4-phosphate pathway"/>
    <property type="evidence" value="ECO:0007669"/>
    <property type="project" value="UniProtKB-UniRule"/>
</dbReference>
<dbReference type="GO" id="GO:0016114">
    <property type="term" value="P:terpenoid biosynthetic process"/>
    <property type="evidence" value="ECO:0007669"/>
    <property type="project" value="InterPro"/>
</dbReference>
<dbReference type="CDD" id="cd00554">
    <property type="entry name" value="MECDP_synthase"/>
    <property type="match status" value="1"/>
</dbReference>
<dbReference type="FunFam" id="3.30.1330.50:FF:000001">
    <property type="entry name" value="2-C-methyl-D-erythritol 2,4-cyclodiphosphate synthase"/>
    <property type="match status" value="1"/>
</dbReference>
<dbReference type="Gene3D" id="3.30.1330.50">
    <property type="entry name" value="2-C-methyl-D-erythritol 2,4-cyclodiphosphate synthase"/>
    <property type="match status" value="1"/>
</dbReference>
<dbReference type="HAMAP" id="MF_00107">
    <property type="entry name" value="IspF"/>
    <property type="match status" value="1"/>
</dbReference>
<dbReference type="InterPro" id="IPR003526">
    <property type="entry name" value="MECDP_synthase"/>
</dbReference>
<dbReference type="InterPro" id="IPR020555">
    <property type="entry name" value="MECDP_synthase_CS"/>
</dbReference>
<dbReference type="InterPro" id="IPR036571">
    <property type="entry name" value="MECDP_synthase_sf"/>
</dbReference>
<dbReference type="NCBIfam" id="TIGR00151">
    <property type="entry name" value="ispF"/>
    <property type="match status" value="1"/>
</dbReference>
<dbReference type="PANTHER" id="PTHR43181">
    <property type="entry name" value="2-C-METHYL-D-ERYTHRITOL 2,4-CYCLODIPHOSPHATE SYNTHASE, CHLOROPLASTIC"/>
    <property type="match status" value="1"/>
</dbReference>
<dbReference type="PANTHER" id="PTHR43181:SF1">
    <property type="entry name" value="2-C-METHYL-D-ERYTHRITOL 2,4-CYCLODIPHOSPHATE SYNTHASE, CHLOROPLASTIC"/>
    <property type="match status" value="1"/>
</dbReference>
<dbReference type="Pfam" id="PF02542">
    <property type="entry name" value="YgbB"/>
    <property type="match status" value="1"/>
</dbReference>
<dbReference type="SUPFAM" id="SSF69765">
    <property type="entry name" value="IpsF-like"/>
    <property type="match status" value="1"/>
</dbReference>
<dbReference type="PROSITE" id="PS01350">
    <property type="entry name" value="ISPF"/>
    <property type="match status" value="1"/>
</dbReference>
<gene>
    <name evidence="1" type="primary">ispF</name>
    <name type="ordered locus">VC0395_A0057</name>
    <name type="ordered locus">VC395_0546</name>
</gene>
<keyword id="KW-0414">Isoprene biosynthesis</keyword>
<keyword id="KW-0456">Lyase</keyword>
<keyword id="KW-0479">Metal-binding</keyword>
<feature type="chain" id="PRO_1000071315" description="2-C-methyl-D-erythritol 2,4-cyclodiphosphate synthase">
    <location>
        <begin position="1"/>
        <end position="158"/>
    </location>
</feature>
<feature type="binding site" evidence="1">
    <location>
        <begin position="9"/>
        <end position="11"/>
    </location>
    <ligand>
        <name>4-CDP-2-C-methyl-D-erythritol 2-phosphate</name>
        <dbReference type="ChEBI" id="CHEBI:57919"/>
    </ligand>
</feature>
<feature type="binding site" evidence="1">
    <location>
        <position position="9"/>
    </location>
    <ligand>
        <name>a divalent metal cation</name>
        <dbReference type="ChEBI" id="CHEBI:60240"/>
    </ligand>
</feature>
<feature type="binding site" evidence="1">
    <location>
        <position position="11"/>
    </location>
    <ligand>
        <name>a divalent metal cation</name>
        <dbReference type="ChEBI" id="CHEBI:60240"/>
    </ligand>
</feature>
<feature type="binding site" evidence="1">
    <location>
        <begin position="35"/>
        <end position="36"/>
    </location>
    <ligand>
        <name>4-CDP-2-C-methyl-D-erythritol 2-phosphate</name>
        <dbReference type="ChEBI" id="CHEBI:57919"/>
    </ligand>
</feature>
<feature type="binding site" evidence="1">
    <location>
        <position position="43"/>
    </location>
    <ligand>
        <name>a divalent metal cation</name>
        <dbReference type="ChEBI" id="CHEBI:60240"/>
    </ligand>
</feature>
<feature type="binding site" evidence="1">
    <location>
        <begin position="57"/>
        <end position="59"/>
    </location>
    <ligand>
        <name>4-CDP-2-C-methyl-D-erythritol 2-phosphate</name>
        <dbReference type="ChEBI" id="CHEBI:57919"/>
    </ligand>
</feature>
<feature type="binding site" evidence="1">
    <location>
        <begin position="62"/>
        <end position="66"/>
    </location>
    <ligand>
        <name>4-CDP-2-C-methyl-D-erythritol 2-phosphate</name>
        <dbReference type="ChEBI" id="CHEBI:57919"/>
    </ligand>
</feature>
<feature type="binding site" evidence="1">
    <location>
        <begin position="101"/>
        <end position="107"/>
    </location>
    <ligand>
        <name>4-CDP-2-C-methyl-D-erythritol 2-phosphate</name>
        <dbReference type="ChEBI" id="CHEBI:57919"/>
    </ligand>
</feature>
<feature type="binding site" evidence="1">
    <location>
        <begin position="133"/>
        <end position="136"/>
    </location>
    <ligand>
        <name>4-CDP-2-C-methyl-D-erythritol 2-phosphate</name>
        <dbReference type="ChEBI" id="CHEBI:57919"/>
    </ligand>
</feature>
<feature type="binding site" evidence="1">
    <location>
        <position position="140"/>
    </location>
    <ligand>
        <name>4-CDP-2-C-methyl-D-erythritol 2-phosphate</name>
        <dbReference type="ChEBI" id="CHEBI:57919"/>
    </ligand>
</feature>
<feature type="binding site" evidence="1">
    <location>
        <position position="143"/>
    </location>
    <ligand>
        <name>4-CDP-2-C-methyl-D-erythritol 2-phosphate</name>
        <dbReference type="ChEBI" id="CHEBI:57919"/>
    </ligand>
</feature>
<feature type="site" description="Transition state stabilizer" evidence="1">
    <location>
        <position position="35"/>
    </location>
</feature>
<feature type="site" description="Transition state stabilizer" evidence="1">
    <location>
        <position position="134"/>
    </location>
</feature>
<sequence>MIRIGHGFDVHRFGGEGPIIIGGVKIPYEQGLIAHSDGDVALHALSDALLGAIAAGDIGRHFPDTDDKWKGADSRELLKDVYRRVKAQGYVLGNADVTIIAQAPKMAPYIQAMCAAIAEDLETDLGNINVKATTTEKLGFTGRKEGIACEAVVLLRKA</sequence>